<dbReference type="EC" id="2.4.2.1" evidence="1"/>
<dbReference type="EC" id="2.4.2.2" evidence="1"/>
<dbReference type="EMBL" id="CP000647">
    <property type="protein sequence ID" value="ABR75787.1"/>
    <property type="molecule type" value="Genomic_DNA"/>
</dbReference>
<dbReference type="RefSeq" id="WP_002890284.1">
    <property type="nucleotide sequence ID" value="NC_009648.1"/>
</dbReference>
<dbReference type="SMR" id="A6T5B6"/>
<dbReference type="STRING" id="272620.KPN_00335"/>
<dbReference type="jPOST" id="A6T5B6"/>
<dbReference type="PaxDb" id="272620-KPN_00335"/>
<dbReference type="EnsemblBacteria" id="ABR75787">
    <property type="protein sequence ID" value="ABR75787"/>
    <property type="gene ID" value="KPN_00335"/>
</dbReference>
<dbReference type="GeneID" id="97396930"/>
<dbReference type="KEGG" id="kpn:KPN_00335"/>
<dbReference type="HOGENOM" id="CLU_157874_0_0_6"/>
<dbReference type="Proteomes" id="UP000000265">
    <property type="component" value="Chromosome"/>
</dbReference>
<dbReference type="GO" id="GO:0005829">
    <property type="term" value="C:cytosol"/>
    <property type="evidence" value="ECO:0007669"/>
    <property type="project" value="TreeGrafter"/>
</dbReference>
<dbReference type="GO" id="GO:0047975">
    <property type="term" value="F:guanosine phosphorylase activity"/>
    <property type="evidence" value="ECO:0007669"/>
    <property type="project" value="UniProtKB-EC"/>
</dbReference>
<dbReference type="GO" id="GO:0004731">
    <property type="term" value="F:purine-nucleoside phosphorylase activity"/>
    <property type="evidence" value="ECO:0007669"/>
    <property type="project" value="UniProtKB-UniRule"/>
</dbReference>
<dbReference type="GO" id="GO:0009032">
    <property type="term" value="F:thymidine phosphorylase activity"/>
    <property type="evidence" value="ECO:0007669"/>
    <property type="project" value="UniProtKB-EC"/>
</dbReference>
<dbReference type="GO" id="GO:0004850">
    <property type="term" value="F:uridine phosphorylase activity"/>
    <property type="evidence" value="ECO:0007669"/>
    <property type="project" value="UniProtKB-EC"/>
</dbReference>
<dbReference type="CDD" id="cd20296">
    <property type="entry name" value="cupin_PpnP-like"/>
    <property type="match status" value="1"/>
</dbReference>
<dbReference type="FunFam" id="2.60.120.10:FF:000016">
    <property type="entry name" value="Pyrimidine/purine nucleoside phosphorylase"/>
    <property type="match status" value="1"/>
</dbReference>
<dbReference type="Gene3D" id="2.60.120.10">
    <property type="entry name" value="Jelly Rolls"/>
    <property type="match status" value="1"/>
</dbReference>
<dbReference type="HAMAP" id="MF_01537">
    <property type="entry name" value="Nucleos_phosphorylase_PpnP"/>
    <property type="match status" value="1"/>
</dbReference>
<dbReference type="InterPro" id="IPR009664">
    <property type="entry name" value="Ppnp"/>
</dbReference>
<dbReference type="InterPro" id="IPR014710">
    <property type="entry name" value="RmlC-like_jellyroll"/>
</dbReference>
<dbReference type="InterPro" id="IPR011051">
    <property type="entry name" value="RmlC_Cupin_sf"/>
</dbReference>
<dbReference type="NCBIfam" id="NF007875">
    <property type="entry name" value="PRK10579.1"/>
    <property type="match status" value="1"/>
</dbReference>
<dbReference type="PANTHER" id="PTHR36540">
    <property type="entry name" value="PYRIMIDINE/PURINE NUCLEOSIDE PHOSPHORYLASE"/>
    <property type="match status" value="1"/>
</dbReference>
<dbReference type="PANTHER" id="PTHR36540:SF1">
    <property type="entry name" value="PYRIMIDINE_PURINE NUCLEOSIDE PHOSPHORYLASE"/>
    <property type="match status" value="1"/>
</dbReference>
<dbReference type="Pfam" id="PF06865">
    <property type="entry name" value="Ppnp"/>
    <property type="match status" value="1"/>
</dbReference>
<dbReference type="SUPFAM" id="SSF51182">
    <property type="entry name" value="RmlC-like cupins"/>
    <property type="match status" value="1"/>
</dbReference>
<name>PPNP_KLEP7</name>
<organism>
    <name type="scientific">Klebsiella pneumoniae subsp. pneumoniae (strain ATCC 700721 / MGH 78578)</name>
    <dbReference type="NCBI Taxonomy" id="272620"/>
    <lineage>
        <taxon>Bacteria</taxon>
        <taxon>Pseudomonadati</taxon>
        <taxon>Pseudomonadota</taxon>
        <taxon>Gammaproteobacteria</taxon>
        <taxon>Enterobacterales</taxon>
        <taxon>Enterobacteriaceae</taxon>
        <taxon>Klebsiella/Raoultella group</taxon>
        <taxon>Klebsiella</taxon>
        <taxon>Klebsiella pneumoniae complex</taxon>
    </lineage>
</organism>
<evidence type="ECO:0000255" key="1">
    <source>
        <dbReference type="HAMAP-Rule" id="MF_01537"/>
    </source>
</evidence>
<comment type="function">
    <text evidence="1">Catalyzes the phosphorolysis of diverse nucleosides, yielding D-ribose 1-phosphate and the respective free bases. Can use uridine, adenosine, guanosine, cytidine, thymidine, inosine and xanthosine as substrates. Also catalyzes the reverse reactions.</text>
</comment>
<comment type="catalytic activity">
    <reaction evidence="1">
        <text>a purine D-ribonucleoside + phosphate = a purine nucleobase + alpha-D-ribose 1-phosphate</text>
        <dbReference type="Rhea" id="RHEA:19805"/>
        <dbReference type="ChEBI" id="CHEBI:26386"/>
        <dbReference type="ChEBI" id="CHEBI:43474"/>
        <dbReference type="ChEBI" id="CHEBI:57720"/>
        <dbReference type="ChEBI" id="CHEBI:142355"/>
        <dbReference type="EC" id="2.4.2.1"/>
    </reaction>
</comment>
<comment type="catalytic activity">
    <reaction evidence="1">
        <text>adenosine + phosphate = alpha-D-ribose 1-phosphate + adenine</text>
        <dbReference type="Rhea" id="RHEA:27642"/>
        <dbReference type="ChEBI" id="CHEBI:16335"/>
        <dbReference type="ChEBI" id="CHEBI:16708"/>
        <dbReference type="ChEBI" id="CHEBI:43474"/>
        <dbReference type="ChEBI" id="CHEBI:57720"/>
        <dbReference type="EC" id="2.4.2.1"/>
    </reaction>
</comment>
<comment type="catalytic activity">
    <reaction evidence="1">
        <text>cytidine + phosphate = cytosine + alpha-D-ribose 1-phosphate</text>
        <dbReference type="Rhea" id="RHEA:52540"/>
        <dbReference type="ChEBI" id="CHEBI:16040"/>
        <dbReference type="ChEBI" id="CHEBI:17562"/>
        <dbReference type="ChEBI" id="CHEBI:43474"/>
        <dbReference type="ChEBI" id="CHEBI:57720"/>
        <dbReference type="EC" id="2.4.2.2"/>
    </reaction>
</comment>
<comment type="catalytic activity">
    <reaction evidence="1">
        <text>guanosine + phosphate = alpha-D-ribose 1-phosphate + guanine</text>
        <dbReference type="Rhea" id="RHEA:13233"/>
        <dbReference type="ChEBI" id="CHEBI:16235"/>
        <dbReference type="ChEBI" id="CHEBI:16750"/>
        <dbReference type="ChEBI" id="CHEBI:43474"/>
        <dbReference type="ChEBI" id="CHEBI:57720"/>
        <dbReference type="EC" id="2.4.2.1"/>
    </reaction>
</comment>
<comment type="catalytic activity">
    <reaction evidence="1">
        <text>inosine + phosphate = alpha-D-ribose 1-phosphate + hypoxanthine</text>
        <dbReference type="Rhea" id="RHEA:27646"/>
        <dbReference type="ChEBI" id="CHEBI:17368"/>
        <dbReference type="ChEBI" id="CHEBI:17596"/>
        <dbReference type="ChEBI" id="CHEBI:43474"/>
        <dbReference type="ChEBI" id="CHEBI:57720"/>
        <dbReference type="EC" id="2.4.2.1"/>
    </reaction>
</comment>
<comment type="catalytic activity">
    <reaction evidence="1">
        <text>thymidine + phosphate = 2-deoxy-alpha-D-ribose 1-phosphate + thymine</text>
        <dbReference type="Rhea" id="RHEA:16037"/>
        <dbReference type="ChEBI" id="CHEBI:17748"/>
        <dbReference type="ChEBI" id="CHEBI:17821"/>
        <dbReference type="ChEBI" id="CHEBI:43474"/>
        <dbReference type="ChEBI" id="CHEBI:57259"/>
        <dbReference type="EC" id="2.4.2.2"/>
    </reaction>
</comment>
<comment type="catalytic activity">
    <reaction evidence="1">
        <text>uridine + phosphate = alpha-D-ribose 1-phosphate + uracil</text>
        <dbReference type="Rhea" id="RHEA:24388"/>
        <dbReference type="ChEBI" id="CHEBI:16704"/>
        <dbReference type="ChEBI" id="CHEBI:17568"/>
        <dbReference type="ChEBI" id="CHEBI:43474"/>
        <dbReference type="ChEBI" id="CHEBI:57720"/>
        <dbReference type="EC" id="2.4.2.2"/>
    </reaction>
</comment>
<comment type="catalytic activity">
    <reaction evidence="1">
        <text>xanthosine + phosphate = alpha-D-ribose 1-phosphate + xanthine</text>
        <dbReference type="Rhea" id="RHEA:27638"/>
        <dbReference type="ChEBI" id="CHEBI:17712"/>
        <dbReference type="ChEBI" id="CHEBI:18107"/>
        <dbReference type="ChEBI" id="CHEBI:43474"/>
        <dbReference type="ChEBI" id="CHEBI:57720"/>
        <dbReference type="EC" id="2.4.2.1"/>
    </reaction>
</comment>
<comment type="similarity">
    <text evidence="1">Belongs to the nucleoside phosphorylase PpnP family.</text>
</comment>
<proteinExistence type="inferred from homology"/>
<gene>
    <name evidence="1" type="primary">ppnP</name>
    <name type="ordered locus">KPN78578_03260</name>
    <name type="ORF">KPN_00335</name>
</gene>
<keyword id="KW-0328">Glycosyltransferase</keyword>
<keyword id="KW-0808">Transferase</keyword>
<protein>
    <recommendedName>
        <fullName evidence="1">Pyrimidine/purine nucleoside phosphorylase</fullName>
        <ecNumber evidence="1">2.4.2.1</ecNumber>
        <ecNumber evidence="1">2.4.2.2</ecNumber>
    </recommendedName>
    <alternativeName>
        <fullName evidence="1">Adenosine phosphorylase</fullName>
    </alternativeName>
    <alternativeName>
        <fullName evidence="1">Cytidine phosphorylase</fullName>
    </alternativeName>
    <alternativeName>
        <fullName evidence="1">Guanosine phosphorylase</fullName>
    </alternativeName>
    <alternativeName>
        <fullName evidence="1">Inosine phosphorylase</fullName>
    </alternativeName>
    <alternativeName>
        <fullName evidence="1">Thymidine phosphorylase</fullName>
    </alternativeName>
    <alternativeName>
        <fullName evidence="1">Uridine phosphorylase</fullName>
    </alternativeName>
    <alternativeName>
        <fullName evidence="1">Xanthosine phosphorylase</fullName>
    </alternativeName>
</protein>
<reference key="1">
    <citation type="submission" date="2006-09" db="EMBL/GenBank/DDBJ databases">
        <authorList>
            <consortium name="The Klebsiella pneumonia Genome Sequencing Project"/>
            <person name="McClelland M."/>
            <person name="Sanderson E.K."/>
            <person name="Spieth J."/>
            <person name="Clifton W.S."/>
            <person name="Latreille P."/>
            <person name="Sabo A."/>
            <person name="Pepin K."/>
            <person name="Bhonagiri V."/>
            <person name="Porwollik S."/>
            <person name="Ali J."/>
            <person name="Wilson R.K."/>
        </authorList>
    </citation>
    <scope>NUCLEOTIDE SEQUENCE [LARGE SCALE GENOMIC DNA]</scope>
    <source>
        <strain>ATCC 700721 / MGH 78578</strain>
    </source>
</reference>
<sequence>MLQSNEYFDGKVKSIGFTSSSTGRASVGVMAEGEYTFGTAQPEEMTVVSGALNVLLPGETEWKVYAAGEVFNVPGNSEFHLQVAEPTSYLCRYL</sequence>
<feature type="chain" id="PRO_1000068732" description="Pyrimidine/purine nucleoside phosphorylase">
    <location>
        <begin position="1"/>
        <end position="94"/>
    </location>
</feature>
<accession>A6T5B6</accession>